<name>MNMC_SHIF8</name>
<organism>
    <name type="scientific">Shigella flexneri serotype 5b (strain 8401)</name>
    <dbReference type="NCBI Taxonomy" id="373384"/>
    <lineage>
        <taxon>Bacteria</taxon>
        <taxon>Pseudomonadati</taxon>
        <taxon>Pseudomonadota</taxon>
        <taxon>Gammaproteobacteria</taxon>
        <taxon>Enterobacterales</taxon>
        <taxon>Enterobacteriaceae</taxon>
        <taxon>Shigella</taxon>
    </lineage>
</organism>
<gene>
    <name evidence="1" type="primary">mnmC</name>
    <name type="ordered locus">SFV_2393</name>
</gene>
<protein>
    <recommendedName>
        <fullName evidence="1">tRNA 5-methylaminomethyl-2-thiouridine biosynthesis bifunctional protein MnmC</fullName>
        <shortName evidence="1">tRNA mnm(5)s(2)U biosynthesis bifunctional protein</shortName>
    </recommendedName>
    <domain>
        <recommendedName>
            <fullName evidence="1">tRNA (mnm(5)s(2)U34)-methyltransferase</fullName>
            <ecNumber evidence="1">2.1.1.61</ecNumber>
        </recommendedName>
    </domain>
    <domain>
        <recommendedName>
            <fullName evidence="1">FAD-dependent cmnm(5)s(2)U34 oxidoreductase</fullName>
            <ecNumber evidence="1">1.5.-.-</ecNumber>
        </recommendedName>
    </domain>
</protein>
<feature type="chain" id="PRO_1000065012" description="tRNA 5-methylaminomethyl-2-thiouridine biosynthesis bifunctional protein MnmC">
    <location>
        <begin position="1"/>
        <end position="668"/>
    </location>
</feature>
<feature type="region of interest" description="tRNA (mnm(5)s(2)U34)-methyltransferase">
    <location>
        <begin position="1"/>
        <end position="245"/>
    </location>
</feature>
<feature type="region of interest" description="FAD-dependent cmnm(5)s(2)U34 oxidoreductase">
    <location>
        <begin position="270"/>
        <end position="668"/>
    </location>
</feature>
<proteinExistence type="inferred from homology"/>
<reference key="1">
    <citation type="journal article" date="2006" name="BMC Genomics">
        <title>Complete genome sequence of Shigella flexneri 5b and comparison with Shigella flexneri 2a.</title>
        <authorList>
            <person name="Nie H."/>
            <person name="Yang F."/>
            <person name="Zhang X."/>
            <person name="Yang J."/>
            <person name="Chen L."/>
            <person name="Wang J."/>
            <person name="Xiong Z."/>
            <person name="Peng J."/>
            <person name="Sun L."/>
            <person name="Dong J."/>
            <person name="Xue Y."/>
            <person name="Xu X."/>
            <person name="Chen S."/>
            <person name="Yao Z."/>
            <person name="Shen Y."/>
            <person name="Jin Q."/>
        </authorList>
    </citation>
    <scope>NUCLEOTIDE SEQUENCE [LARGE SCALE GENOMIC DNA]</scope>
    <source>
        <strain>8401</strain>
    </source>
</reference>
<keyword id="KW-0963">Cytoplasm</keyword>
<keyword id="KW-0274">FAD</keyword>
<keyword id="KW-0285">Flavoprotein</keyword>
<keyword id="KW-0489">Methyltransferase</keyword>
<keyword id="KW-0511">Multifunctional enzyme</keyword>
<keyword id="KW-0560">Oxidoreductase</keyword>
<keyword id="KW-0949">S-adenosyl-L-methionine</keyword>
<keyword id="KW-0808">Transferase</keyword>
<keyword id="KW-0819">tRNA processing</keyword>
<dbReference type="EC" id="2.1.1.61" evidence="1"/>
<dbReference type="EC" id="1.5.-.-" evidence="1"/>
<dbReference type="EMBL" id="CP000266">
    <property type="protein sequence ID" value="ABF04504.1"/>
    <property type="molecule type" value="Genomic_DNA"/>
</dbReference>
<dbReference type="RefSeq" id="WP_000683784.1">
    <property type="nucleotide sequence ID" value="NC_008258.1"/>
</dbReference>
<dbReference type="SMR" id="Q0T2G1"/>
<dbReference type="KEGG" id="sfv:SFV_2393"/>
<dbReference type="HOGENOM" id="CLU_022427_1_0_6"/>
<dbReference type="Proteomes" id="UP000000659">
    <property type="component" value="Chromosome"/>
</dbReference>
<dbReference type="GO" id="GO:0005737">
    <property type="term" value="C:cytoplasm"/>
    <property type="evidence" value="ECO:0007669"/>
    <property type="project" value="UniProtKB-SubCell"/>
</dbReference>
<dbReference type="GO" id="GO:0050660">
    <property type="term" value="F:flavin adenine dinucleotide binding"/>
    <property type="evidence" value="ECO:0007669"/>
    <property type="project" value="UniProtKB-UniRule"/>
</dbReference>
<dbReference type="GO" id="GO:0016645">
    <property type="term" value="F:oxidoreductase activity, acting on the CH-NH group of donors"/>
    <property type="evidence" value="ECO:0007669"/>
    <property type="project" value="InterPro"/>
</dbReference>
<dbReference type="GO" id="GO:0004808">
    <property type="term" value="F:tRNA (5-methylaminomethyl-2-thiouridylate)(34)-methyltransferase activity"/>
    <property type="evidence" value="ECO:0007669"/>
    <property type="project" value="UniProtKB-EC"/>
</dbReference>
<dbReference type="GO" id="GO:0032259">
    <property type="term" value="P:methylation"/>
    <property type="evidence" value="ECO:0007669"/>
    <property type="project" value="UniProtKB-KW"/>
</dbReference>
<dbReference type="GO" id="GO:0002098">
    <property type="term" value="P:tRNA wobble uridine modification"/>
    <property type="evidence" value="ECO:0007669"/>
    <property type="project" value="TreeGrafter"/>
</dbReference>
<dbReference type="FunFam" id="3.40.50.150:FF:000107">
    <property type="entry name" value="tRNA 5-methylaminomethyl-2-thiouridine biosynthesis bifunctional protein MnmC"/>
    <property type="match status" value="1"/>
</dbReference>
<dbReference type="Gene3D" id="3.30.9.10">
    <property type="entry name" value="D-Amino Acid Oxidase, subunit A, domain 2"/>
    <property type="match status" value="1"/>
</dbReference>
<dbReference type="Gene3D" id="3.50.50.60">
    <property type="entry name" value="FAD/NAD(P)-binding domain"/>
    <property type="match status" value="1"/>
</dbReference>
<dbReference type="Gene3D" id="3.40.50.150">
    <property type="entry name" value="Vaccinia Virus protein VP39"/>
    <property type="match status" value="1"/>
</dbReference>
<dbReference type="HAMAP" id="MF_01102">
    <property type="entry name" value="MnmC"/>
    <property type="match status" value="1"/>
</dbReference>
<dbReference type="InterPro" id="IPR006076">
    <property type="entry name" value="FAD-dep_OxRdtase"/>
</dbReference>
<dbReference type="InterPro" id="IPR036188">
    <property type="entry name" value="FAD/NAD-bd_sf"/>
</dbReference>
<dbReference type="InterPro" id="IPR008471">
    <property type="entry name" value="MnmC-like_methylTransf"/>
</dbReference>
<dbReference type="InterPro" id="IPR029063">
    <property type="entry name" value="SAM-dependent_MTases_sf"/>
</dbReference>
<dbReference type="InterPro" id="IPR023032">
    <property type="entry name" value="tRNA_MAMT_biosynth_bifunc_MnmC"/>
</dbReference>
<dbReference type="InterPro" id="IPR047785">
    <property type="entry name" value="tRNA_MNMC2"/>
</dbReference>
<dbReference type="InterPro" id="IPR017610">
    <property type="entry name" value="tRNA_S-uridine_synth_MnmC_C"/>
</dbReference>
<dbReference type="NCBIfam" id="TIGR03197">
    <property type="entry name" value="MnmC_Cterm"/>
    <property type="match status" value="1"/>
</dbReference>
<dbReference type="NCBIfam" id="NF002480">
    <property type="entry name" value="PRK01747.1-1"/>
    <property type="match status" value="1"/>
</dbReference>
<dbReference type="NCBIfam" id="NF002481">
    <property type="entry name" value="PRK01747.1-2"/>
    <property type="match status" value="1"/>
</dbReference>
<dbReference type="NCBIfam" id="NF002482">
    <property type="entry name" value="PRK01747.1-3"/>
    <property type="match status" value="1"/>
</dbReference>
<dbReference type="NCBIfam" id="NF002484">
    <property type="entry name" value="PRK01747.1-5"/>
    <property type="match status" value="1"/>
</dbReference>
<dbReference type="NCBIfam" id="NF033855">
    <property type="entry name" value="tRNA_MNMC2"/>
    <property type="match status" value="1"/>
</dbReference>
<dbReference type="PANTHER" id="PTHR13847">
    <property type="entry name" value="SARCOSINE DEHYDROGENASE-RELATED"/>
    <property type="match status" value="1"/>
</dbReference>
<dbReference type="PANTHER" id="PTHR13847:SF283">
    <property type="entry name" value="TRNA 5-METHYLAMINOMETHYL-2-THIOURIDINE BIOSYNTHESIS BIFUNCTIONAL PROTEIN MNMC"/>
    <property type="match status" value="1"/>
</dbReference>
<dbReference type="Pfam" id="PF01266">
    <property type="entry name" value="DAO"/>
    <property type="match status" value="1"/>
</dbReference>
<dbReference type="Pfam" id="PF05430">
    <property type="entry name" value="Methyltransf_30"/>
    <property type="match status" value="1"/>
</dbReference>
<dbReference type="SUPFAM" id="SSF51905">
    <property type="entry name" value="FAD/NAD(P)-binding domain"/>
    <property type="match status" value="1"/>
</dbReference>
<dbReference type="SUPFAM" id="SSF53335">
    <property type="entry name" value="S-adenosyl-L-methionine-dependent methyltransferases"/>
    <property type="match status" value="1"/>
</dbReference>
<accession>Q0T2G1</accession>
<comment type="function">
    <text evidence="1">Catalyzes the last two steps in the biosynthesis of 5-methylaminomethyl-2-thiouridine (mnm(5)s(2)U) at the wobble position (U34) in tRNA. Catalyzes the FAD-dependent demodification of cmnm(5)s(2)U34 to nm(5)s(2)U34, followed by the transfer of a methyl group from S-adenosyl-L-methionine to nm(5)s(2)U34, to form mnm(5)s(2)U34.</text>
</comment>
<comment type="catalytic activity">
    <reaction evidence="1">
        <text>5-aminomethyl-2-thiouridine(34) in tRNA + S-adenosyl-L-methionine = 5-methylaminomethyl-2-thiouridine(34) in tRNA + S-adenosyl-L-homocysteine + H(+)</text>
        <dbReference type="Rhea" id="RHEA:19569"/>
        <dbReference type="Rhea" id="RHEA-COMP:10195"/>
        <dbReference type="Rhea" id="RHEA-COMP:10197"/>
        <dbReference type="ChEBI" id="CHEBI:15378"/>
        <dbReference type="ChEBI" id="CHEBI:57856"/>
        <dbReference type="ChEBI" id="CHEBI:59789"/>
        <dbReference type="ChEBI" id="CHEBI:74454"/>
        <dbReference type="ChEBI" id="CHEBI:74455"/>
        <dbReference type="EC" id="2.1.1.61"/>
    </reaction>
</comment>
<comment type="cofactor">
    <cofactor evidence="1">
        <name>FAD</name>
        <dbReference type="ChEBI" id="CHEBI:57692"/>
    </cofactor>
</comment>
<comment type="subcellular location">
    <subcellularLocation>
        <location evidence="1">Cytoplasm</location>
    </subcellularLocation>
</comment>
<comment type="similarity">
    <text evidence="1">In the N-terminal section; belongs to the methyltransferase superfamily. tRNA (mnm(5)s(2)U34)-methyltransferase family.</text>
</comment>
<comment type="similarity">
    <text evidence="1">In the C-terminal section; belongs to the DAO family.</text>
</comment>
<evidence type="ECO:0000255" key="1">
    <source>
        <dbReference type="HAMAP-Rule" id="MF_01102"/>
    </source>
</evidence>
<sequence>MKHYSIQPANLEFNAEGTPVSRDFDDVYFSNDNGLEETRYVFLGGNQLEVRFPEHPHPLFVIAESGFGTGLNFLTLWKAFDQFREAHPQAQLQRLHFISFEKFPLTRADLALAHQHWPELAPWAEQLQAQWPMPLPGCHRLLLDEGRVTLDLWFGDINELTSQLDDSLNQKVDAWFLDGFAPAKNPDMWTQNLFNAMARLARPGGTLATFTSAGFVRRGLQEAGFTMQKRKGFGRKREMLCGVMEQTLPLPCSTPWFNRTGSSKREVAIIGGGIASALLSLALLRRGWQVALYCADEAPALGASGNRQGALYPLLSKHDEALNRLFSNAFTFARRFYDQLPVKFDHDWCGVTQLGWDEKSQHKIAQMLSMDLPAELAVAVEANAVEQITGVATNCSGITYPQGGWLCPAELTRNVLELAQQQGLQIYYQYQLQNLSRKDDCWLLNFAGDQQATHSVVVLANGHQISRFSQTSTLPVYSVAGQVSHIPTTPELAELKQVLCYDGYLTPQNPANQHHCIGASYHRGSEDTAYSEDDQQQNRQRLIDCFPQAQWAKEVDVSDKEARCGVRCATRDHLPMVGNVPDYEATLVEYASLAEQKDEAVSAPVFDDLFMFAALGSRGLCSAPLCAEILAAQMSDEPNPMDASTLAALNPNRLWVRKLLKGKAVKAG</sequence>